<feature type="signal peptide" evidence="1">
    <location>
        <begin position="1"/>
        <end position="23"/>
    </location>
</feature>
<feature type="chain" id="PRO_0000005195" description="Eotaxin">
    <location>
        <begin position="24"/>
        <end position="97"/>
    </location>
</feature>
<feature type="glycosylation site" description="O-linked (GalNAc...) threonine" evidence="4">
    <location>
        <position position="94"/>
    </location>
</feature>
<feature type="disulfide bond" evidence="5">
    <location>
        <begin position="32"/>
        <end position="57"/>
    </location>
</feature>
<feature type="disulfide bond" evidence="5">
    <location>
        <begin position="33"/>
        <end position="73"/>
    </location>
</feature>
<feature type="sequence variant" id="VAR_001634">
    <original>L</original>
    <variation>P</variation>
    <location>
        <position position="7"/>
    </location>
</feature>
<feature type="sequence variant" id="VAR_001635" description="In dbSNP:rs1129844.">
    <original>A</original>
    <variation>T</variation>
    <location>
        <position position="23"/>
    </location>
</feature>
<feature type="sequence variant" id="VAR_001636">
    <original>R</original>
    <variation>S</variation>
    <location>
        <position position="51"/>
    </location>
</feature>
<feature type="sequence variant" id="VAR_001637">
    <original>K</original>
    <variation>R</variation>
    <location>
        <position position="79"/>
    </location>
</feature>
<feature type="sequence variant" id="VAR_048705" description="In dbSNP:rs34262946.">
    <original>K</original>
    <variation>T</variation>
    <location>
        <position position="86"/>
    </location>
</feature>
<feature type="strand" evidence="8">
    <location>
        <begin position="26"/>
        <end position="29"/>
    </location>
</feature>
<feature type="strand" evidence="10">
    <location>
        <begin position="30"/>
        <end position="32"/>
    </location>
</feature>
<feature type="helix" evidence="10">
    <location>
        <begin position="43"/>
        <end position="45"/>
    </location>
</feature>
<feature type="strand" evidence="10">
    <location>
        <begin position="46"/>
        <end position="52"/>
    </location>
</feature>
<feature type="strand" evidence="10">
    <location>
        <begin position="57"/>
        <end position="59"/>
    </location>
</feature>
<feature type="strand" evidence="10">
    <location>
        <begin position="61"/>
        <end position="66"/>
    </location>
</feature>
<feature type="strand" evidence="9">
    <location>
        <begin position="67"/>
        <end position="70"/>
    </location>
</feature>
<feature type="strand" evidence="10">
    <location>
        <begin position="71"/>
        <end position="74"/>
    </location>
</feature>
<feature type="helix" evidence="10">
    <location>
        <begin position="79"/>
        <end position="90"/>
    </location>
</feature>
<protein>
    <recommendedName>
        <fullName>Eotaxin</fullName>
    </recommendedName>
    <alternativeName>
        <fullName>C-C motif chemokine 11</fullName>
    </alternativeName>
    <alternativeName>
        <fullName>Eosinophil chemotactic protein</fullName>
    </alternativeName>
    <alternativeName>
        <fullName>Small-inducible cytokine A11</fullName>
    </alternativeName>
</protein>
<gene>
    <name type="primary">CCL11</name>
    <name type="synonym">SCYA11</name>
</gene>
<accession>P51671</accession>
<accession>P50877</accession>
<accession>Q92490</accession>
<accession>Q92491</accession>
<evidence type="ECO:0000255" key="1"/>
<evidence type="ECO:0000269" key="2">
    <source>
    </source>
</evidence>
<evidence type="ECO:0000269" key="3">
    <source>
    </source>
</evidence>
<evidence type="ECO:0000269" key="4">
    <source>
    </source>
</evidence>
<evidence type="ECO:0000269" key="5">
    <source>
    </source>
</evidence>
<evidence type="ECO:0000305" key="6"/>
<evidence type="ECO:0000305" key="7">
    <source>
    </source>
</evidence>
<evidence type="ECO:0007829" key="8">
    <source>
        <dbReference type="PDB" id="1EOT"/>
    </source>
</evidence>
<evidence type="ECO:0007829" key="9">
    <source>
        <dbReference type="PDB" id="2MPM"/>
    </source>
</evidence>
<evidence type="ECO:0007829" key="10">
    <source>
        <dbReference type="PDB" id="7SCS"/>
    </source>
</evidence>
<name>CCL11_HUMAN</name>
<comment type="function">
    <text evidence="2 3">In response to the presence of allergens, this protein directly promotes the accumulation of eosinophils, a prominent feature of allergic inflammatory reactions (PubMed:8597956). Binds to CCR3 (PubMed:8631813).</text>
</comment>
<comment type="interaction">
    <interactant intactId="EBI-727357">
        <id>P51671</id>
    </interactant>
    <interactant intactId="EBI-16744026">
        <id>Q9Y4X3</id>
        <label>CCL27</label>
    </interactant>
    <organismsDiffer>false</organismsDiffer>
    <experiments>2</experiments>
</comment>
<comment type="interaction">
    <interactant intactId="EBI-727357">
        <id>P51671</id>
    </interactant>
    <interactant intactId="EBI-7783254">
        <id>Q9NRJ3</id>
        <label>CCL28</label>
    </interactant>
    <organismsDiffer>false</organismsDiffer>
    <experiments>2</experiments>
</comment>
<comment type="interaction">
    <interactant intactId="EBI-727357">
        <id>P51671</id>
    </interactant>
    <interactant intactId="EBI-2848366">
        <id>P13501</id>
        <label>CCL5</label>
    </interactant>
    <organismsDiffer>false</organismsDiffer>
    <experiments>2</experiments>
</comment>
<comment type="interaction">
    <interactant intactId="EBI-727357">
        <id>P51671</id>
    </interactant>
    <interactant intactId="EBI-6625120">
        <id>P51677</id>
        <label>CCR3</label>
    </interactant>
    <organismsDiffer>false</organismsDiffer>
    <experiments>2</experiments>
</comment>
<comment type="interaction">
    <interactant intactId="EBI-727357">
        <id>P51671</id>
    </interactant>
    <interactant intactId="EBI-7815386">
        <id>P02778</id>
        <label>CXCL10</label>
    </interactant>
    <organismsDiffer>false</organismsDiffer>
    <experiments>2</experiments>
</comment>
<comment type="interaction">
    <interactant intactId="EBI-727357">
        <id>P51671</id>
    </interactant>
    <interactant intactId="EBI-3913254">
        <id>P48061</id>
        <label>CXCL12</label>
    </interactant>
    <organismsDiffer>false</organismsDiffer>
    <experiments>2</experiments>
</comment>
<comment type="interaction">
    <interactant intactId="EBI-727357">
        <id>P51671</id>
    </interactant>
    <interactant intactId="EBI-2871277">
        <id>P27487</id>
        <label>DPP4</label>
    </interactant>
    <organismsDiffer>false</organismsDiffer>
    <experiments>2</experiments>
</comment>
<comment type="interaction">
    <interactant intactId="EBI-727357">
        <id>P51671</id>
    </interactant>
    <interactant intactId="EBI-2565740">
        <id>P02776</id>
        <label>PF4</label>
    </interactant>
    <organismsDiffer>false</organismsDiffer>
    <experiments>2</experiments>
</comment>
<comment type="subcellular location">
    <subcellularLocation>
        <location evidence="7">Secreted</location>
    </subcellularLocation>
</comment>
<comment type="induction">
    <text evidence="2">Induced by TNF, IL1A/interleukin-1 alpha and IFNG/IFN-gamma.</text>
</comment>
<comment type="PTM">
    <text evidence="4">O-linked glycan consists of a Gal-GalNAc disaccharide which is modified with up to 2 sialic acid residues.</text>
</comment>
<comment type="similarity">
    <text evidence="6">Belongs to the intercrine beta (chemokine CC) family.</text>
</comment>
<comment type="online information" name="Wikipedia">
    <link uri="https://en.wikipedia.org/wiki/CCL11"/>
    <text>CCL11 entry</text>
</comment>
<reference key="1">
    <citation type="journal article" date="1996" name="Nat. Med.">
        <title>Human eotaxin is a specific chemoattractant for eosinophil cells and provides a new mechanism to explain tissue eosinophilia.</title>
        <authorList>
            <person name="Garcia-Zepeda E.A."/>
            <person name="Rothenberg M.E."/>
            <person name="Ownbey T.R."/>
            <person name="Leder P."/>
            <person name="Luster A.D."/>
        </authorList>
    </citation>
    <scope>NUCLEOTIDE SEQUENCE [MRNA]</scope>
    <scope>FUNCTION</scope>
    <scope>SUBCELLULAR LOCATION</scope>
    <scope>INDUCTION</scope>
</reference>
<reference key="2">
    <citation type="journal article" date="1996" name="J. Clin. Invest.">
        <title>Cloning of the human eosinophil chemoattractant, eotaxin. Expression, receptor binding, and functional properties suggest a mechanism for the selective recruitment of eosinophils.</title>
        <authorList>
            <person name="Ponath P.D."/>
            <person name="Qin S."/>
            <person name="Ringler D.J."/>
            <person name="Clark-Lewis I."/>
            <person name="Wang J."/>
            <person name="Kassam N."/>
            <person name="Smith H."/>
            <person name="Shi X."/>
            <person name="Gonzalo J.A."/>
            <person name="Newman W."/>
            <person name="Gutierrez-Ramos J.-C."/>
            <person name="Mackay C.R."/>
        </authorList>
    </citation>
    <scope>NUCLEOTIDE SEQUENCE [GENOMIC DNA]</scope>
</reference>
<reference key="3">
    <citation type="journal article" date="1996" name="J. Biol. Chem.">
        <title>Molecular cloning of human eotaxin, an eosinophil-selective CC chemokine, and identification of a specific eosinophil eotaxin receptor, CC chemokine receptor 3.</title>
        <authorList>
            <person name="Kitaura M."/>
            <person name="Nakajima T."/>
            <person name="Imai T."/>
            <person name="Harada S."/>
            <person name="Combadiere C."/>
            <person name="Tiffany H.L."/>
            <person name="Murphy P.M."/>
            <person name="Yoshie O."/>
        </authorList>
    </citation>
    <scope>NUCLEOTIDE SEQUENCE [MRNA]</scope>
    <scope>FUNCTION</scope>
    <source>
        <tissue>Small intestine</tissue>
    </source>
</reference>
<reference key="4">
    <citation type="journal article" date="1996" name="Biochem. Biophys. Res. Commun.">
        <title>Human dermal fibroblasts express eotaxin: molecular cloning, mRNA expression, and identification of eotaxin sequence variants.</title>
        <authorList>
            <person name="Bartels J."/>
            <person name="Schlueter C."/>
            <person name="Richter E."/>
            <person name="Noso N."/>
            <person name="Kulke R."/>
            <person name="Christophers E."/>
            <person name="Schroeder J.-M."/>
        </authorList>
    </citation>
    <scope>NUCLEOTIDE SEQUENCE [MRNA]</scope>
    <scope>PROTEIN SEQUENCE OF 60-65 AND 75-88</scope>
    <scope>VARIANTS</scope>
    <source>
        <tissue>Foreskin</tissue>
    </source>
</reference>
<reference key="5">
    <citation type="journal article" date="1997" name="Genomics">
        <title>Genomic organization, complete sequence, and chromosomal location of the gene for human eotaxin (SCYA11), an eosinophil-specific CC chemokine.</title>
        <authorList>
            <person name="Garcia-Zepeda E.A."/>
            <person name="Rothenberg M.E."/>
            <person name="Weremowicz S."/>
            <person name="Sarafi M.N."/>
            <person name="Morton C.C."/>
            <person name="Luster A.D."/>
        </authorList>
    </citation>
    <scope>NUCLEOTIDE SEQUENCE [GENOMIC DNA]</scope>
    <source>
        <tissue>Placenta</tissue>
    </source>
</reference>
<reference key="6">
    <citation type="journal article" date="1997" name="Biochem. Biophys. Res. Commun.">
        <title>Genomic organization, sequence, and transcriptional regulation of the human eotaxin gene.</title>
        <authorList>
            <person name="Hein H."/>
            <person name="Schlueter C."/>
            <person name="Kulke R."/>
            <person name="Christophers E."/>
            <person name="Schroeder J.-M."/>
            <person name="Bartels J."/>
        </authorList>
    </citation>
    <scope>NUCLEOTIDE SEQUENCE [GENOMIC DNA]</scope>
    <source>
        <tissue>Lung</tissue>
    </source>
</reference>
<reference key="7">
    <citation type="journal article" date="2004" name="Genome Res.">
        <title>The status, quality, and expansion of the NIH full-length cDNA project: the Mammalian Gene Collection (MGC).</title>
        <authorList>
            <consortium name="The MGC Project Team"/>
        </authorList>
    </citation>
    <scope>NUCLEOTIDE SEQUENCE [LARGE SCALE MRNA]</scope>
    <source>
        <tissue>Lung</tissue>
    </source>
</reference>
<reference key="8">
    <citation type="journal article" date="1998" name="Eur. J. Biochem.">
        <title>Delayed production of biologically active O-glycosylated forms of human eotaxin by tumor-necrosis-factor-alpha-stimulated dermal fibroblasts.</title>
        <authorList>
            <person name="Noso N."/>
            <person name="Bartels J."/>
            <person name="Mallet A.I."/>
            <person name="Mochizuki M."/>
            <person name="Christophers E."/>
            <person name="Schroeder J.-M."/>
        </authorList>
    </citation>
    <scope>GLYCOSYLATION AT THR-94</scope>
    <source>
        <tissue>Blood</tissue>
    </source>
</reference>
<reference key="9">
    <citation type="journal article" date="1998" name="J. Biol. Chem.">
        <title>Solution structure of eotaxin, a chemokine that selectively recruits eosinophils in allergic inflammation.</title>
        <authorList>
            <person name="Crump M.P."/>
            <person name="Rajarathnam K."/>
            <person name="Kim K.S."/>
            <person name="Clark-Lewis I."/>
            <person name="Sykes B.D."/>
        </authorList>
    </citation>
    <scope>STRUCTURE BY NMR</scope>
    <scope>DISULFIDE BONDS</scope>
</reference>
<proteinExistence type="evidence at protein level"/>
<sequence length="97" mass="10732">MKVSAALLWLLLIAAAFSPQGLAGPASVPTTCCFNLANRKIPLQRLESYRRITSGKCPQKAVIFKTKLAKDICADPKKKWVQDSMKYLDQKSPTPKP</sequence>
<dbReference type="EMBL" id="U46573">
    <property type="protein sequence ID" value="AAA98957.1"/>
    <property type="molecule type" value="mRNA"/>
</dbReference>
<dbReference type="EMBL" id="U34780">
    <property type="protein sequence ID" value="AAC50369.1"/>
    <property type="molecule type" value="Genomic_DNA"/>
</dbReference>
<dbReference type="EMBL" id="D49372">
    <property type="protein sequence ID" value="BAA08370.1"/>
    <property type="molecule type" value="mRNA"/>
</dbReference>
<dbReference type="EMBL" id="Z69291">
    <property type="protein sequence ID" value="CAA93258.1"/>
    <property type="molecule type" value="mRNA"/>
</dbReference>
<dbReference type="EMBL" id="Z75668">
    <property type="protein sequence ID" value="CAA99997.1"/>
    <property type="molecule type" value="mRNA"/>
</dbReference>
<dbReference type="EMBL" id="Z75669">
    <property type="protein sequence ID" value="CAA99998.1"/>
    <property type="molecule type" value="mRNA"/>
</dbReference>
<dbReference type="EMBL" id="U46572">
    <property type="protein sequence ID" value="AAC51297.1"/>
    <property type="molecule type" value="Genomic_DNA"/>
</dbReference>
<dbReference type="EMBL" id="Z92709">
    <property type="protein sequence ID" value="CAB07027.1"/>
    <property type="molecule type" value="Genomic_DNA"/>
</dbReference>
<dbReference type="EMBL" id="BC017850">
    <property type="protein sequence ID" value="AAH17850.1"/>
    <property type="molecule type" value="mRNA"/>
</dbReference>
<dbReference type="CCDS" id="CCDS11279.1"/>
<dbReference type="PIR" id="JC4912">
    <property type="entry name" value="JC4912"/>
</dbReference>
<dbReference type="RefSeq" id="NP_002977.1">
    <property type="nucleotide sequence ID" value="NM_002986.3"/>
</dbReference>
<dbReference type="PDB" id="1EOT">
    <property type="method" value="NMR"/>
    <property type="chains" value="A=24-97"/>
</dbReference>
<dbReference type="PDB" id="2EOT">
    <property type="method" value="NMR"/>
    <property type="chains" value="A=24-97"/>
</dbReference>
<dbReference type="PDB" id="2MPM">
    <property type="method" value="NMR"/>
    <property type="chains" value="A=24-97"/>
</dbReference>
<dbReference type="PDB" id="7SCS">
    <property type="method" value="X-ray"/>
    <property type="resolution" value="1.51 A"/>
    <property type="chains" value="B=24-97"/>
</dbReference>
<dbReference type="PDBsum" id="1EOT"/>
<dbReference type="PDBsum" id="2EOT"/>
<dbReference type="PDBsum" id="2MPM"/>
<dbReference type="PDBsum" id="7SCS"/>
<dbReference type="BMRB" id="P51671"/>
<dbReference type="SMR" id="P51671"/>
<dbReference type="BioGRID" id="112259">
    <property type="interactions" value="29"/>
</dbReference>
<dbReference type="DIP" id="DIP-5858N"/>
<dbReference type="FunCoup" id="P51671">
    <property type="interactions" value="605"/>
</dbReference>
<dbReference type="IntAct" id="P51671">
    <property type="interactions" value="28"/>
</dbReference>
<dbReference type="MINT" id="P51671"/>
<dbReference type="STRING" id="9606.ENSP00000302234"/>
<dbReference type="BindingDB" id="P51671"/>
<dbReference type="ChEMBL" id="CHEMBL3286077"/>
<dbReference type="DrugBank" id="DB05429">
    <property type="generic name" value="Bertilimumab"/>
</dbReference>
<dbReference type="GlyCosmos" id="P51671">
    <property type="glycosylation" value="1 site, No reported glycans"/>
</dbReference>
<dbReference type="GlyGen" id="P51671">
    <property type="glycosylation" value="2 sites, 1 O-linked glycan (1 site)"/>
</dbReference>
<dbReference type="iPTMnet" id="P51671"/>
<dbReference type="PhosphoSitePlus" id="P51671"/>
<dbReference type="BioMuta" id="CCL11"/>
<dbReference type="DMDM" id="1706661"/>
<dbReference type="PaxDb" id="9606-ENSP00000302234"/>
<dbReference type="PeptideAtlas" id="P51671"/>
<dbReference type="ABCD" id="P51671">
    <property type="antibodies" value="3 sequenced antibodies"/>
</dbReference>
<dbReference type="Antibodypedia" id="15485">
    <property type="antibodies" value="418 antibodies from 43 providers"/>
</dbReference>
<dbReference type="DNASU" id="6356"/>
<dbReference type="Ensembl" id="ENST00000305869.4">
    <property type="protein sequence ID" value="ENSP00000302234.3"/>
    <property type="gene ID" value="ENSG00000172156.4"/>
</dbReference>
<dbReference type="GeneID" id="6356"/>
<dbReference type="KEGG" id="hsa:6356"/>
<dbReference type="MANE-Select" id="ENST00000305869.4">
    <property type="protein sequence ID" value="ENSP00000302234.3"/>
    <property type="RefSeq nucleotide sequence ID" value="NM_002986.3"/>
    <property type="RefSeq protein sequence ID" value="NP_002977.1"/>
</dbReference>
<dbReference type="AGR" id="HGNC:10610"/>
<dbReference type="CTD" id="6356"/>
<dbReference type="DisGeNET" id="6356"/>
<dbReference type="GeneCards" id="CCL11"/>
<dbReference type="HGNC" id="HGNC:10610">
    <property type="gene designation" value="CCL11"/>
</dbReference>
<dbReference type="HPA" id="ENSG00000172156">
    <property type="expression patterns" value="Tissue enhanced (intestine, lymphoid tissue, stomach, urinary bladder)"/>
</dbReference>
<dbReference type="MalaCards" id="CCL11"/>
<dbReference type="MIM" id="601156">
    <property type="type" value="gene"/>
</dbReference>
<dbReference type="neXtProt" id="NX_P51671"/>
<dbReference type="OpenTargets" id="ENSG00000172156"/>
<dbReference type="PharmGKB" id="PA35543"/>
<dbReference type="VEuPathDB" id="HostDB:ENSG00000172156"/>
<dbReference type="eggNOG" id="ENOG502S8M4">
    <property type="taxonomic scope" value="Eukaryota"/>
</dbReference>
<dbReference type="GeneTree" id="ENSGT01130000278316"/>
<dbReference type="HOGENOM" id="CLU_141716_1_0_1"/>
<dbReference type="InParanoid" id="P51671"/>
<dbReference type="OMA" id="SKCPQTA"/>
<dbReference type="OrthoDB" id="8934837at2759"/>
<dbReference type="PAN-GO" id="P51671">
    <property type="GO annotations" value="15 GO annotations based on evolutionary models"/>
</dbReference>
<dbReference type="PhylomeDB" id="P51671"/>
<dbReference type="TreeFam" id="TF334888"/>
<dbReference type="PathwayCommons" id="P51671"/>
<dbReference type="Reactome" id="R-HSA-380108">
    <property type="pathway name" value="Chemokine receptors bind chemokines"/>
</dbReference>
<dbReference type="Reactome" id="R-HSA-6785807">
    <property type="pathway name" value="Interleukin-4 and Interleukin-13 signaling"/>
</dbReference>
<dbReference type="SignaLink" id="P51671"/>
<dbReference type="SIGNOR" id="P51671"/>
<dbReference type="BioGRID-ORCS" id="6356">
    <property type="hits" value="11 hits in 1137 CRISPR screens"/>
</dbReference>
<dbReference type="ChiTaRS" id="CCL11">
    <property type="organism name" value="human"/>
</dbReference>
<dbReference type="EvolutionaryTrace" id="P51671"/>
<dbReference type="GeneWiki" id="CCL11"/>
<dbReference type="GenomeRNAi" id="6356"/>
<dbReference type="Pharos" id="P51671">
    <property type="development level" value="Tbio"/>
</dbReference>
<dbReference type="PRO" id="PR:P51671"/>
<dbReference type="Proteomes" id="UP000005640">
    <property type="component" value="Chromosome 17"/>
</dbReference>
<dbReference type="RNAct" id="P51671">
    <property type="molecule type" value="protein"/>
</dbReference>
<dbReference type="Bgee" id="ENSG00000172156">
    <property type="expression patterns" value="Expressed in pylorus and 87 other cell types or tissues"/>
</dbReference>
<dbReference type="ExpressionAtlas" id="P51671">
    <property type="expression patterns" value="baseline and differential"/>
</dbReference>
<dbReference type="GO" id="GO:0005576">
    <property type="term" value="C:extracellular region"/>
    <property type="evidence" value="ECO:0000314"/>
    <property type="project" value="BHF-UCL"/>
</dbReference>
<dbReference type="GO" id="GO:0005615">
    <property type="term" value="C:extracellular space"/>
    <property type="evidence" value="ECO:0000318"/>
    <property type="project" value="GO_Central"/>
</dbReference>
<dbReference type="GO" id="GO:0048020">
    <property type="term" value="F:CCR chemokine receptor binding"/>
    <property type="evidence" value="ECO:0000318"/>
    <property type="project" value="GO_Central"/>
</dbReference>
<dbReference type="GO" id="GO:0031728">
    <property type="term" value="F:CCR3 chemokine receptor binding"/>
    <property type="evidence" value="ECO:0000314"/>
    <property type="project" value="CAFA"/>
</dbReference>
<dbReference type="GO" id="GO:0008009">
    <property type="term" value="F:chemokine activity"/>
    <property type="evidence" value="ECO:0000314"/>
    <property type="project" value="UniProtKB"/>
</dbReference>
<dbReference type="GO" id="GO:0046983">
    <property type="term" value="F:protein dimerization activity"/>
    <property type="evidence" value="ECO:0000314"/>
    <property type="project" value="CAFA"/>
</dbReference>
<dbReference type="GO" id="GO:0048018">
    <property type="term" value="F:receptor ligand activity"/>
    <property type="evidence" value="ECO:0000314"/>
    <property type="project" value="CAFA"/>
</dbReference>
<dbReference type="GO" id="GO:0007015">
    <property type="term" value="P:actin filament organization"/>
    <property type="evidence" value="ECO:0007669"/>
    <property type="project" value="Ensembl"/>
</dbReference>
<dbReference type="GO" id="GO:0061844">
    <property type="term" value="P:antimicrobial humoral immune response mediated by antimicrobial peptide"/>
    <property type="evidence" value="ECO:0000318"/>
    <property type="project" value="GO_Central"/>
</dbReference>
<dbReference type="GO" id="GO:0060444">
    <property type="term" value="P:branching involved in mammary gland duct morphogenesis"/>
    <property type="evidence" value="ECO:0007669"/>
    <property type="project" value="Ensembl"/>
</dbReference>
<dbReference type="GO" id="GO:0007155">
    <property type="term" value="P:cell adhesion"/>
    <property type="evidence" value="ECO:0000304"/>
    <property type="project" value="ProtInc"/>
</dbReference>
<dbReference type="GO" id="GO:0070098">
    <property type="term" value="P:chemokine-mediated signaling pathway"/>
    <property type="evidence" value="ECO:0000314"/>
    <property type="project" value="BHF-UCL"/>
</dbReference>
<dbReference type="GO" id="GO:0006935">
    <property type="term" value="P:chemotaxis"/>
    <property type="evidence" value="ECO:0000304"/>
    <property type="project" value="ProtInc"/>
</dbReference>
<dbReference type="GO" id="GO:0002544">
    <property type="term" value="P:chronic inflammatory response"/>
    <property type="evidence" value="ECO:0007669"/>
    <property type="project" value="Ensembl"/>
</dbReference>
<dbReference type="GO" id="GO:0007010">
    <property type="term" value="P:cytoskeleton organization"/>
    <property type="evidence" value="ECO:0000314"/>
    <property type="project" value="UniProtKB"/>
</dbReference>
<dbReference type="GO" id="GO:0048245">
    <property type="term" value="P:eosinophil chemotaxis"/>
    <property type="evidence" value="ECO:0000314"/>
    <property type="project" value="UniProtKB"/>
</dbReference>
<dbReference type="GO" id="GO:0070371">
    <property type="term" value="P:ERK1 and ERK2 cascade"/>
    <property type="evidence" value="ECO:0007669"/>
    <property type="project" value="Ensembl"/>
</dbReference>
<dbReference type="GO" id="GO:0006954">
    <property type="term" value="P:inflammatory response"/>
    <property type="evidence" value="ECO:0000318"/>
    <property type="project" value="GO_Central"/>
</dbReference>
<dbReference type="GO" id="GO:0006874">
    <property type="term" value="P:intracellular calcium ion homeostasis"/>
    <property type="evidence" value="ECO:0000304"/>
    <property type="project" value="ProtInc"/>
</dbReference>
<dbReference type="GO" id="GO:0007611">
    <property type="term" value="P:learning or memory"/>
    <property type="evidence" value="ECO:0000250"/>
    <property type="project" value="ARUK-UCL"/>
</dbReference>
<dbReference type="GO" id="GO:0060763">
    <property type="term" value="P:mammary duct terminal end bud growth"/>
    <property type="evidence" value="ECO:0007669"/>
    <property type="project" value="Ensembl"/>
</dbReference>
<dbReference type="GO" id="GO:0002551">
    <property type="term" value="P:mast cell chemotaxis"/>
    <property type="evidence" value="ECO:0007669"/>
    <property type="project" value="Ensembl"/>
</dbReference>
<dbReference type="GO" id="GO:0050768">
    <property type="term" value="P:negative regulation of neurogenesis"/>
    <property type="evidence" value="ECO:0000250"/>
    <property type="project" value="ARUK-UCL"/>
</dbReference>
<dbReference type="GO" id="GO:0030838">
    <property type="term" value="P:positive regulation of actin filament polymerization"/>
    <property type="evidence" value="ECO:0000314"/>
    <property type="project" value="BHF-UCL"/>
</dbReference>
<dbReference type="GO" id="GO:0045766">
    <property type="term" value="P:positive regulation of angiogenesis"/>
    <property type="evidence" value="ECO:0007669"/>
    <property type="project" value="Ensembl"/>
</dbReference>
<dbReference type="GO" id="GO:0030335">
    <property type="term" value="P:positive regulation of cell migration"/>
    <property type="evidence" value="ECO:0000314"/>
    <property type="project" value="BHF-UCL"/>
</dbReference>
<dbReference type="GO" id="GO:0001938">
    <property type="term" value="P:positive regulation of endothelial cell proliferation"/>
    <property type="evidence" value="ECO:0000314"/>
    <property type="project" value="BHF-UCL"/>
</dbReference>
<dbReference type="GO" id="GO:0006468">
    <property type="term" value="P:protein phosphorylation"/>
    <property type="evidence" value="ECO:0000304"/>
    <property type="project" value="ProtInc"/>
</dbReference>
<dbReference type="GO" id="GO:0008360">
    <property type="term" value="P:regulation of cell shape"/>
    <property type="evidence" value="ECO:0000314"/>
    <property type="project" value="UniProtKB"/>
</dbReference>
<dbReference type="GO" id="GO:0035962">
    <property type="term" value="P:response to interleukin-13"/>
    <property type="evidence" value="ECO:0007669"/>
    <property type="project" value="Ensembl"/>
</dbReference>
<dbReference type="GO" id="GO:0070670">
    <property type="term" value="P:response to interleukin-4"/>
    <property type="evidence" value="ECO:0007669"/>
    <property type="project" value="Ensembl"/>
</dbReference>
<dbReference type="GO" id="GO:0009314">
    <property type="term" value="P:response to radiation"/>
    <property type="evidence" value="ECO:0000304"/>
    <property type="project" value="ProtInc"/>
</dbReference>
<dbReference type="GO" id="GO:0009615">
    <property type="term" value="P:response to virus"/>
    <property type="evidence" value="ECO:0000304"/>
    <property type="project" value="ProtInc"/>
</dbReference>
<dbReference type="GO" id="GO:0007165">
    <property type="term" value="P:signal transduction"/>
    <property type="evidence" value="ECO:0000304"/>
    <property type="project" value="ProtInc"/>
</dbReference>
<dbReference type="CDD" id="cd00272">
    <property type="entry name" value="Chemokine_CC"/>
    <property type="match status" value="1"/>
</dbReference>
<dbReference type="DisProt" id="DP00641"/>
<dbReference type="FunFam" id="2.40.50.40:FF:000002">
    <property type="entry name" value="C-C motif chemokine"/>
    <property type="match status" value="1"/>
</dbReference>
<dbReference type="Gene3D" id="2.40.50.40">
    <property type="match status" value="1"/>
</dbReference>
<dbReference type="InterPro" id="IPR039809">
    <property type="entry name" value="Chemokine_b/g/d"/>
</dbReference>
<dbReference type="InterPro" id="IPR000827">
    <property type="entry name" value="Chemokine_CC_CS"/>
</dbReference>
<dbReference type="InterPro" id="IPR001811">
    <property type="entry name" value="Chemokine_IL8-like_dom"/>
</dbReference>
<dbReference type="InterPro" id="IPR036048">
    <property type="entry name" value="Interleukin_8-like_sf"/>
</dbReference>
<dbReference type="PANTHER" id="PTHR12015:SF146">
    <property type="entry name" value="EOTAXIN"/>
    <property type="match status" value="1"/>
</dbReference>
<dbReference type="PANTHER" id="PTHR12015">
    <property type="entry name" value="SMALL INDUCIBLE CYTOKINE A"/>
    <property type="match status" value="1"/>
</dbReference>
<dbReference type="Pfam" id="PF00048">
    <property type="entry name" value="IL8"/>
    <property type="match status" value="1"/>
</dbReference>
<dbReference type="SMART" id="SM00199">
    <property type="entry name" value="SCY"/>
    <property type="match status" value="1"/>
</dbReference>
<dbReference type="SUPFAM" id="SSF54117">
    <property type="entry name" value="Interleukin 8-like chemokines"/>
    <property type="match status" value="1"/>
</dbReference>
<dbReference type="PROSITE" id="PS00472">
    <property type="entry name" value="SMALL_CYTOKINES_CC"/>
    <property type="match status" value="1"/>
</dbReference>
<keyword id="KW-0002">3D-structure</keyword>
<keyword id="KW-0145">Chemotaxis</keyword>
<keyword id="KW-0202">Cytokine</keyword>
<keyword id="KW-0903">Direct protein sequencing</keyword>
<keyword id="KW-1015">Disulfide bond</keyword>
<keyword id="KW-0325">Glycoprotein</keyword>
<keyword id="KW-0395">Inflammatory response</keyword>
<keyword id="KW-1185">Reference proteome</keyword>
<keyword id="KW-0964">Secreted</keyword>
<keyword id="KW-0732">Signal</keyword>
<organism>
    <name type="scientific">Homo sapiens</name>
    <name type="common">Human</name>
    <dbReference type="NCBI Taxonomy" id="9606"/>
    <lineage>
        <taxon>Eukaryota</taxon>
        <taxon>Metazoa</taxon>
        <taxon>Chordata</taxon>
        <taxon>Craniata</taxon>
        <taxon>Vertebrata</taxon>
        <taxon>Euteleostomi</taxon>
        <taxon>Mammalia</taxon>
        <taxon>Eutheria</taxon>
        <taxon>Euarchontoglires</taxon>
        <taxon>Primates</taxon>
        <taxon>Haplorrhini</taxon>
        <taxon>Catarrhini</taxon>
        <taxon>Hominidae</taxon>
        <taxon>Homo</taxon>
    </lineage>
</organism>